<reference key="1">
    <citation type="journal article" date="2008" name="Genome Res.">
        <title>Chlamydia trachomatis: genome sequence analysis of lymphogranuloma venereum isolates.</title>
        <authorList>
            <person name="Thomson N.R."/>
            <person name="Holden M.T.G."/>
            <person name="Carder C."/>
            <person name="Lennard N."/>
            <person name="Lockey S.J."/>
            <person name="Marsh P."/>
            <person name="Skipp P."/>
            <person name="O'Connor C.D."/>
            <person name="Goodhead I."/>
            <person name="Norbertzcak H."/>
            <person name="Harris B."/>
            <person name="Ormond D."/>
            <person name="Rance R."/>
            <person name="Quail M.A."/>
            <person name="Parkhill J."/>
            <person name="Stephens R.S."/>
            <person name="Clarke I.N."/>
        </authorList>
    </citation>
    <scope>NUCLEOTIDE SEQUENCE [LARGE SCALE GENOMIC DNA]</scope>
    <source>
        <strain>UCH-1/proctitis</strain>
    </source>
</reference>
<proteinExistence type="inferred from homology"/>
<evidence type="ECO:0000250" key="1">
    <source>
        <dbReference type="UniProtKB" id="P07639"/>
    </source>
</evidence>
<evidence type="ECO:0000250" key="2">
    <source>
        <dbReference type="UniProtKB" id="P9WPX9"/>
    </source>
</evidence>
<evidence type="ECO:0000250" key="3">
    <source>
        <dbReference type="UniProtKB" id="Q6GGU4"/>
    </source>
</evidence>
<evidence type="ECO:0000305" key="4"/>
<protein>
    <recommendedName>
        <fullName evidence="1">3-dehydroquinate synthase</fullName>
        <shortName evidence="1">DHQS</shortName>
        <ecNumber evidence="1">4.2.3.4</ecNumber>
    </recommendedName>
</protein>
<accession>B0BC03</accession>
<organism>
    <name type="scientific">Chlamydia trachomatis serovar L2b (strain UCH-1/proctitis)</name>
    <dbReference type="NCBI Taxonomy" id="471473"/>
    <lineage>
        <taxon>Bacteria</taxon>
        <taxon>Pseudomonadati</taxon>
        <taxon>Chlamydiota</taxon>
        <taxon>Chlamydiia</taxon>
        <taxon>Chlamydiales</taxon>
        <taxon>Chlamydiaceae</taxon>
        <taxon>Chlamydia/Chlamydophila group</taxon>
        <taxon>Chlamydia</taxon>
    </lineage>
</organism>
<feature type="chain" id="PRO_1000094487" description="3-dehydroquinate synthase">
    <location>
        <begin position="1"/>
        <end position="373"/>
    </location>
</feature>
<feature type="binding site" evidence="2">
    <location>
        <begin position="67"/>
        <end position="72"/>
    </location>
    <ligand>
        <name>NAD(+)</name>
        <dbReference type="ChEBI" id="CHEBI:57540"/>
    </ligand>
</feature>
<feature type="binding site" evidence="2">
    <location>
        <begin position="101"/>
        <end position="105"/>
    </location>
    <ligand>
        <name>NAD(+)</name>
        <dbReference type="ChEBI" id="CHEBI:57540"/>
    </ligand>
</feature>
<feature type="binding site" evidence="2">
    <location>
        <begin position="125"/>
        <end position="126"/>
    </location>
    <ligand>
        <name>NAD(+)</name>
        <dbReference type="ChEBI" id="CHEBI:57540"/>
    </ligand>
</feature>
<feature type="binding site" evidence="2">
    <location>
        <position position="138"/>
    </location>
    <ligand>
        <name>NAD(+)</name>
        <dbReference type="ChEBI" id="CHEBI:57540"/>
    </ligand>
</feature>
<feature type="binding site" evidence="3">
    <location>
        <position position="147"/>
    </location>
    <ligand>
        <name>NAD(+)</name>
        <dbReference type="ChEBI" id="CHEBI:57540"/>
    </ligand>
</feature>
<feature type="binding site" evidence="2">
    <location>
        <position position="180"/>
    </location>
    <ligand>
        <name>Zn(2+)</name>
        <dbReference type="ChEBI" id="CHEBI:29105"/>
    </ligand>
</feature>
<feature type="binding site" evidence="2">
    <location>
        <position position="240"/>
    </location>
    <ligand>
        <name>Zn(2+)</name>
        <dbReference type="ChEBI" id="CHEBI:29105"/>
    </ligand>
</feature>
<feature type="binding site" evidence="2">
    <location>
        <position position="256"/>
    </location>
    <ligand>
        <name>Zn(2+)</name>
        <dbReference type="ChEBI" id="CHEBI:29105"/>
    </ligand>
</feature>
<name>AROB_CHLTB</name>
<sequence length="373" mass="41183">MIELVTDSPHPIHLVDSLQNPKLFASLSTDFPLIFITNTKLNTLILPPLLDLARSLGFSVETLTIPEGEETKTGDTFLSLHQQLTDLNVPRQATLIGVGGGVILDIAGFVAATHCRGMPFIAIPTTLVAMIDASIGGKNGINLNHIKNRIGSFYLPKAVWICPRKLSFLPQQELHHGIAECIKHAYIADSAILPLLQDPNALKKEDKLSLLIKKNCLCKASVVQQDVRDYAKRQILNFGHTLGHALEMLFIGKIPHSCAISVGMVLETKLSLSLGVARSPAILHSLIQDLLRYQLPVSLKDLYMRAQIPPHNCDQILSALTYDKKKQNTPLPPFVMIEEIGLAASFDGRFCQTISKHILTKVLEEEFYAMHNN</sequence>
<comment type="function">
    <text evidence="1">Catalyzes the conversion of 3-deoxy-D-arabino-heptulosonate 7-phosphate (DAHP) to dehydroquinate (DHQ).</text>
</comment>
<comment type="catalytic activity">
    <reaction evidence="1">
        <text>7-phospho-2-dehydro-3-deoxy-D-arabino-heptonate = 3-dehydroquinate + phosphate</text>
        <dbReference type="Rhea" id="RHEA:21968"/>
        <dbReference type="ChEBI" id="CHEBI:32364"/>
        <dbReference type="ChEBI" id="CHEBI:43474"/>
        <dbReference type="ChEBI" id="CHEBI:58394"/>
        <dbReference type="EC" id="4.2.3.4"/>
    </reaction>
</comment>
<comment type="cofactor">
    <cofactor evidence="1">
        <name>NAD(+)</name>
        <dbReference type="ChEBI" id="CHEBI:57540"/>
    </cofactor>
</comment>
<comment type="cofactor">
    <cofactor evidence="1">
        <name>Co(2+)</name>
        <dbReference type="ChEBI" id="CHEBI:48828"/>
    </cofactor>
    <cofactor evidence="1">
        <name>Zn(2+)</name>
        <dbReference type="ChEBI" id="CHEBI:29105"/>
    </cofactor>
    <text evidence="1">Binds 1 divalent metal cation per subunit. Can use either Co(2+) or Zn(2+).</text>
</comment>
<comment type="pathway">
    <text evidence="1">Metabolic intermediate biosynthesis; chorismate biosynthesis; chorismate from D-erythrose 4-phosphate and phosphoenolpyruvate: step 2/7.</text>
</comment>
<comment type="subcellular location">
    <subcellularLocation>
        <location evidence="1">Cytoplasm</location>
    </subcellularLocation>
</comment>
<comment type="similarity">
    <text evidence="4">Belongs to the sugar phosphate cyclases superfamily. Dehydroquinate synthase family.</text>
</comment>
<keyword id="KW-0028">Amino-acid biosynthesis</keyword>
<keyword id="KW-0057">Aromatic amino acid biosynthesis</keyword>
<keyword id="KW-0170">Cobalt</keyword>
<keyword id="KW-0963">Cytoplasm</keyword>
<keyword id="KW-0456">Lyase</keyword>
<keyword id="KW-0479">Metal-binding</keyword>
<keyword id="KW-0520">NAD</keyword>
<keyword id="KW-0547">Nucleotide-binding</keyword>
<keyword id="KW-0862">Zinc</keyword>
<dbReference type="EC" id="4.2.3.4" evidence="1"/>
<dbReference type="EMBL" id="AM884177">
    <property type="protein sequence ID" value="CAP07018.1"/>
    <property type="molecule type" value="Genomic_DNA"/>
</dbReference>
<dbReference type="RefSeq" id="WP_009873761.1">
    <property type="nucleotide sequence ID" value="NC_010280.2"/>
</dbReference>
<dbReference type="SMR" id="B0BC03"/>
<dbReference type="KEGG" id="ctl:CTLon_0621"/>
<dbReference type="HOGENOM" id="CLU_001201_0_1_0"/>
<dbReference type="UniPathway" id="UPA00053">
    <property type="reaction ID" value="UER00085"/>
</dbReference>
<dbReference type="Proteomes" id="UP001154401">
    <property type="component" value="Chromosome"/>
</dbReference>
<dbReference type="GO" id="GO:0005737">
    <property type="term" value="C:cytoplasm"/>
    <property type="evidence" value="ECO:0007669"/>
    <property type="project" value="UniProtKB-SubCell"/>
</dbReference>
<dbReference type="GO" id="GO:0003856">
    <property type="term" value="F:3-dehydroquinate synthase activity"/>
    <property type="evidence" value="ECO:0007669"/>
    <property type="project" value="UniProtKB-EC"/>
</dbReference>
<dbReference type="GO" id="GO:0046872">
    <property type="term" value="F:metal ion binding"/>
    <property type="evidence" value="ECO:0007669"/>
    <property type="project" value="UniProtKB-KW"/>
</dbReference>
<dbReference type="GO" id="GO:0000166">
    <property type="term" value="F:nucleotide binding"/>
    <property type="evidence" value="ECO:0007669"/>
    <property type="project" value="UniProtKB-KW"/>
</dbReference>
<dbReference type="GO" id="GO:0008652">
    <property type="term" value="P:amino acid biosynthetic process"/>
    <property type="evidence" value="ECO:0007669"/>
    <property type="project" value="UniProtKB-KW"/>
</dbReference>
<dbReference type="GO" id="GO:0009073">
    <property type="term" value="P:aromatic amino acid family biosynthetic process"/>
    <property type="evidence" value="ECO:0007669"/>
    <property type="project" value="UniProtKB-KW"/>
</dbReference>
<dbReference type="GO" id="GO:0009423">
    <property type="term" value="P:chorismate biosynthetic process"/>
    <property type="evidence" value="ECO:0007669"/>
    <property type="project" value="UniProtKB-UniPathway"/>
</dbReference>
<dbReference type="CDD" id="cd08195">
    <property type="entry name" value="DHQS"/>
    <property type="match status" value="1"/>
</dbReference>
<dbReference type="FunFam" id="3.40.50.1970:FF:000007">
    <property type="entry name" value="Pentafunctional AROM polypeptide"/>
    <property type="match status" value="1"/>
</dbReference>
<dbReference type="Gene3D" id="3.40.50.1970">
    <property type="match status" value="1"/>
</dbReference>
<dbReference type="Gene3D" id="1.20.1090.10">
    <property type="entry name" value="Dehydroquinate synthase-like - alpha domain"/>
    <property type="match status" value="1"/>
</dbReference>
<dbReference type="InterPro" id="IPR050071">
    <property type="entry name" value="Dehydroquinate_synthase"/>
</dbReference>
<dbReference type="InterPro" id="IPR016037">
    <property type="entry name" value="DHQ_synth_AroB"/>
</dbReference>
<dbReference type="InterPro" id="IPR030963">
    <property type="entry name" value="DHQ_synth_fam"/>
</dbReference>
<dbReference type="InterPro" id="IPR030960">
    <property type="entry name" value="DHQS/DOIS_N"/>
</dbReference>
<dbReference type="InterPro" id="IPR056179">
    <property type="entry name" value="DHQS_C"/>
</dbReference>
<dbReference type="NCBIfam" id="TIGR01357">
    <property type="entry name" value="aroB"/>
    <property type="match status" value="1"/>
</dbReference>
<dbReference type="PANTHER" id="PTHR43622">
    <property type="entry name" value="3-DEHYDROQUINATE SYNTHASE"/>
    <property type="match status" value="1"/>
</dbReference>
<dbReference type="PANTHER" id="PTHR43622:SF7">
    <property type="entry name" value="3-DEHYDROQUINATE SYNTHASE, CHLOROPLASTIC"/>
    <property type="match status" value="1"/>
</dbReference>
<dbReference type="Pfam" id="PF01761">
    <property type="entry name" value="DHQ_synthase"/>
    <property type="match status" value="1"/>
</dbReference>
<dbReference type="Pfam" id="PF24621">
    <property type="entry name" value="DHQS_C"/>
    <property type="match status" value="1"/>
</dbReference>
<dbReference type="PIRSF" id="PIRSF001455">
    <property type="entry name" value="DHQ_synth"/>
    <property type="match status" value="1"/>
</dbReference>
<dbReference type="SUPFAM" id="SSF56796">
    <property type="entry name" value="Dehydroquinate synthase-like"/>
    <property type="match status" value="1"/>
</dbReference>
<gene>
    <name evidence="1" type="primary">aroB</name>
    <name type="ordered locus">CTLon_0621</name>
</gene>